<comment type="function">
    <text evidence="1">Specifically methylates the guanine in position 1835 (m2G1835) of 23S rRNA.</text>
</comment>
<comment type="catalytic activity">
    <reaction evidence="1">
        <text>guanosine(1835) in 23S rRNA + S-adenosyl-L-methionine = N(2)-methylguanosine(1835) in 23S rRNA + S-adenosyl-L-homocysteine + H(+)</text>
        <dbReference type="Rhea" id="RHEA:42744"/>
        <dbReference type="Rhea" id="RHEA-COMP:10217"/>
        <dbReference type="Rhea" id="RHEA-COMP:10218"/>
        <dbReference type="ChEBI" id="CHEBI:15378"/>
        <dbReference type="ChEBI" id="CHEBI:57856"/>
        <dbReference type="ChEBI" id="CHEBI:59789"/>
        <dbReference type="ChEBI" id="CHEBI:74269"/>
        <dbReference type="ChEBI" id="CHEBI:74481"/>
        <dbReference type="EC" id="2.1.1.174"/>
    </reaction>
</comment>
<comment type="subcellular location">
    <subcellularLocation>
        <location evidence="1">Cytoplasm</location>
    </subcellularLocation>
</comment>
<comment type="similarity">
    <text evidence="1">Belongs to the methyltransferase superfamily. RlmG family.</text>
</comment>
<feature type="chain" id="PRO_0000366498" description="Ribosomal RNA large subunit methyltransferase G">
    <location>
        <begin position="1"/>
        <end position="378"/>
    </location>
</feature>
<evidence type="ECO:0000255" key="1">
    <source>
        <dbReference type="HAMAP-Rule" id="MF_01859"/>
    </source>
</evidence>
<name>RLMG_SALPK</name>
<organism>
    <name type="scientific">Salmonella paratyphi A (strain AKU_12601)</name>
    <dbReference type="NCBI Taxonomy" id="554290"/>
    <lineage>
        <taxon>Bacteria</taxon>
        <taxon>Pseudomonadati</taxon>
        <taxon>Pseudomonadota</taxon>
        <taxon>Gammaproteobacteria</taxon>
        <taxon>Enterobacterales</taxon>
        <taxon>Enterobacteriaceae</taxon>
        <taxon>Salmonella</taxon>
    </lineage>
</organism>
<gene>
    <name evidence="1" type="primary">rlmG</name>
    <name type="ordered locus">SSPA2884</name>
</gene>
<reference key="1">
    <citation type="journal article" date="2009" name="BMC Genomics">
        <title>Pseudogene accumulation in the evolutionary histories of Salmonella enterica serovars Paratyphi A and Typhi.</title>
        <authorList>
            <person name="Holt K.E."/>
            <person name="Thomson N.R."/>
            <person name="Wain J."/>
            <person name="Langridge G.C."/>
            <person name="Hasan R."/>
            <person name="Bhutta Z.A."/>
            <person name="Quail M.A."/>
            <person name="Norbertczak H."/>
            <person name="Walker D."/>
            <person name="Simmonds M."/>
            <person name="White B."/>
            <person name="Bason N."/>
            <person name="Mungall K."/>
            <person name="Dougan G."/>
            <person name="Parkhill J."/>
        </authorList>
    </citation>
    <scope>NUCLEOTIDE SEQUENCE [LARGE SCALE GENOMIC DNA]</scope>
    <source>
        <strain>AKU_12601</strain>
    </source>
</reference>
<dbReference type="EC" id="2.1.1.174" evidence="1"/>
<dbReference type="EMBL" id="FM200053">
    <property type="protein sequence ID" value="CAR61131.1"/>
    <property type="molecule type" value="Genomic_DNA"/>
</dbReference>
<dbReference type="RefSeq" id="WP_000019989.1">
    <property type="nucleotide sequence ID" value="NC_011147.1"/>
</dbReference>
<dbReference type="SMR" id="B5BG31"/>
<dbReference type="KEGG" id="sek:SSPA2884"/>
<dbReference type="HOGENOM" id="CLU_040288_4_0_6"/>
<dbReference type="Proteomes" id="UP000001869">
    <property type="component" value="Chromosome"/>
</dbReference>
<dbReference type="GO" id="GO:0005737">
    <property type="term" value="C:cytoplasm"/>
    <property type="evidence" value="ECO:0007669"/>
    <property type="project" value="UniProtKB-SubCell"/>
</dbReference>
<dbReference type="GO" id="GO:0052916">
    <property type="term" value="F:23S rRNA (guanine(1835)-N(2))-methyltransferase activity"/>
    <property type="evidence" value="ECO:0007669"/>
    <property type="project" value="UniProtKB-EC"/>
</dbReference>
<dbReference type="GO" id="GO:0003676">
    <property type="term" value="F:nucleic acid binding"/>
    <property type="evidence" value="ECO:0007669"/>
    <property type="project" value="InterPro"/>
</dbReference>
<dbReference type="CDD" id="cd02440">
    <property type="entry name" value="AdoMet_MTases"/>
    <property type="match status" value="1"/>
</dbReference>
<dbReference type="FunFam" id="3.40.50.150:FF:000046">
    <property type="entry name" value="Ribosomal RNA large subunit methyltransferase G"/>
    <property type="match status" value="1"/>
</dbReference>
<dbReference type="FunFam" id="3.40.50.150:FF:000047">
    <property type="entry name" value="Ribosomal RNA large subunit methyltransferase G"/>
    <property type="match status" value="1"/>
</dbReference>
<dbReference type="Gene3D" id="3.40.50.150">
    <property type="entry name" value="Vaccinia Virus protein VP39"/>
    <property type="match status" value="2"/>
</dbReference>
<dbReference type="HAMAP" id="MF_01859">
    <property type="entry name" value="23SrRNA_methyltr_G"/>
    <property type="match status" value="1"/>
</dbReference>
<dbReference type="InterPro" id="IPR002052">
    <property type="entry name" value="DNA_methylase_N6_adenine_CS"/>
</dbReference>
<dbReference type="InterPro" id="IPR017237">
    <property type="entry name" value="rRNA_m2G-MeTrfase_RlmG"/>
</dbReference>
<dbReference type="InterPro" id="IPR046977">
    <property type="entry name" value="RsmC/RlmG"/>
</dbReference>
<dbReference type="InterPro" id="IPR029063">
    <property type="entry name" value="SAM-dependent_MTases_sf"/>
</dbReference>
<dbReference type="InterPro" id="IPR007848">
    <property type="entry name" value="Small_mtfrase_dom"/>
</dbReference>
<dbReference type="NCBIfam" id="NF011577">
    <property type="entry name" value="PRK15001.1"/>
    <property type="match status" value="1"/>
</dbReference>
<dbReference type="PANTHER" id="PTHR47816:SF5">
    <property type="entry name" value="RIBOSOMAL RNA LARGE SUBUNIT METHYLTRANSFERASE G"/>
    <property type="match status" value="1"/>
</dbReference>
<dbReference type="PANTHER" id="PTHR47816">
    <property type="entry name" value="RIBOSOMAL RNA SMALL SUBUNIT METHYLTRANSFERASE C"/>
    <property type="match status" value="1"/>
</dbReference>
<dbReference type="Pfam" id="PF05175">
    <property type="entry name" value="MTS"/>
    <property type="match status" value="1"/>
</dbReference>
<dbReference type="PIRSF" id="PIRSF037565">
    <property type="entry name" value="RRNA_m2G_Mtase_RsmD_prd"/>
    <property type="match status" value="1"/>
</dbReference>
<dbReference type="SUPFAM" id="SSF53335">
    <property type="entry name" value="S-adenosyl-L-methionine-dependent methyltransferases"/>
    <property type="match status" value="1"/>
</dbReference>
<protein>
    <recommendedName>
        <fullName evidence="1">Ribosomal RNA large subunit methyltransferase G</fullName>
        <ecNumber evidence="1">2.1.1.174</ecNumber>
    </recommendedName>
    <alternativeName>
        <fullName evidence="1">23S rRNA m2G1835 methyltransferase</fullName>
    </alternativeName>
    <alternativeName>
        <fullName evidence="1">rRNA (guanine-N(2)-)-methyltransferase RlmG</fullName>
    </alternativeName>
</protein>
<proteinExistence type="inferred from homology"/>
<keyword id="KW-0963">Cytoplasm</keyword>
<keyword id="KW-0489">Methyltransferase</keyword>
<keyword id="KW-0698">rRNA processing</keyword>
<keyword id="KW-0949">S-adenosyl-L-methionine</keyword>
<keyword id="KW-0808">Transferase</keyword>
<accession>B5BG31</accession>
<sequence length="378" mass="42272">MSHVDDGFRSLTLKRFPQTDDVNPLLAWEAADEYLLQQLDETEIRGPVLILNDTFGALSCALAEHSPYSIGDSYLSELGTRENLRHNGIAESSVTFLDSTADYPQAPGVVLIKVPKTLALLEQQLRALRKVVTAQTRIIAGAKARDIHTSTLELFEKVLGPTTTTLAWKKARLINCTFSHPQLADAPQTLSWKLEDTGWTIHNHANVFSRTGLDIGARFFMQHLPENLDGEIVDLGCGNGVIGLSLLAKNPQANVVFVDESPMAVDSSRLNVETNLPEAFERCEFMINNALSGVEPFRFNAVFCNPPFHQKHALTDNIAWEMFHHARRCLKINGELYIVANRHLDYFHKLKKIFGNCATIATNNKFVILKAVKQGRRR</sequence>